<comment type="function">
    <text evidence="1">One of the primary rRNA binding proteins, it binds specifically to the 5'-end of 16S ribosomal RNA.</text>
</comment>
<comment type="subunit">
    <text evidence="1">Part of the 30S ribosomal subunit.</text>
</comment>
<comment type="similarity">
    <text evidence="1">Belongs to the universal ribosomal protein uS17 family.</text>
</comment>
<protein>
    <recommendedName>
        <fullName evidence="1">Small ribosomal subunit protein uS17</fullName>
    </recommendedName>
    <alternativeName>
        <fullName evidence="2">30S ribosomal protein S17</fullName>
    </alternativeName>
</protein>
<accession>C4ZBS8</accession>
<evidence type="ECO:0000255" key="1">
    <source>
        <dbReference type="HAMAP-Rule" id="MF_01345"/>
    </source>
</evidence>
<evidence type="ECO:0000305" key="2"/>
<name>RS17_AGARV</name>
<dbReference type="EMBL" id="CP001107">
    <property type="protein sequence ID" value="ACR74218.1"/>
    <property type="molecule type" value="Genomic_DNA"/>
</dbReference>
<dbReference type="RefSeq" id="WP_012741336.1">
    <property type="nucleotide sequence ID" value="NZ_CAXSYD010000003.1"/>
</dbReference>
<dbReference type="SMR" id="C4ZBS8"/>
<dbReference type="STRING" id="515619.EUBREC_0427"/>
<dbReference type="PaxDb" id="515619-EUBREC_0427"/>
<dbReference type="GeneID" id="86987337"/>
<dbReference type="KEGG" id="ere:EUBREC_0427"/>
<dbReference type="HOGENOM" id="CLU_073626_1_0_9"/>
<dbReference type="Proteomes" id="UP000001477">
    <property type="component" value="Chromosome"/>
</dbReference>
<dbReference type="GO" id="GO:0022627">
    <property type="term" value="C:cytosolic small ribosomal subunit"/>
    <property type="evidence" value="ECO:0007669"/>
    <property type="project" value="TreeGrafter"/>
</dbReference>
<dbReference type="GO" id="GO:0019843">
    <property type="term" value="F:rRNA binding"/>
    <property type="evidence" value="ECO:0007669"/>
    <property type="project" value="UniProtKB-UniRule"/>
</dbReference>
<dbReference type="GO" id="GO:0003735">
    <property type="term" value="F:structural constituent of ribosome"/>
    <property type="evidence" value="ECO:0007669"/>
    <property type="project" value="InterPro"/>
</dbReference>
<dbReference type="GO" id="GO:0006412">
    <property type="term" value="P:translation"/>
    <property type="evidence" value="ECO:0007669"/>
    <property type="project" value="UniProtKB-UniRule"/>
</dbReference>
<dbReference type="CDD" id="cd00364">
    <property type="entry name" value="Ribosomal_uS17"/>
    <property type="match status" value="1"/>
</dbReference>
<dbReference type="FunFam" id="2.40.50.140:FF:000123">
    <property type="entry name" value="30S ribosomal protein S17"/>
    <property type="match status" value="1"/>
</dbReference>
<dbReference type="Gene3D" id="2.40.50.140">
    <property type="entry name" value="Nucleic acid-binding proteins"/>
    <property type="match status" value="1"/>
</dbReference>
<dbReference type="HAMAP" id="MF_01345_B">
    <property type="entry name" value="Ribosomal_uS17_B"/>
    <property type="match status" value="1"/>
</dbReference>
<dbReference type="InterPro" id="IPR012340">
    <property type="entry name" value="NA-bd_OB-fold"/>
</dbReference>
<dbReference type="InterPro" id="IPR000266">
    <property type="entry name" value="Ribosomal_uS17"/>
</dbReference>
<dbReference type="InterPro" id="IPR019984">
    <property type="entry name" value="Ribosomal_uS17_bact/chlr"/>
</dbReference>
<dbReference type="InterPro" id="IPR019979">
    <property type="entry name" value="Ribosomal_uS17_CS"/>
</dbReference>
<dbReference type="NCBIfam" id="NF004123">
    <property type="entry name" value="PRK05610.1"/>
    <property type="match status" value="1"/>
</dbReference>
<dbReference type="NCBIfam" id="TIGR03635">
    <property type="entry name" value="uS17_bact"/>
    <property type="match status" value="1"/>
</dbReference>
<dbReference type="PANTHER" id="PTHR10744">
    <property type="entry name" value="40S RIBOSOMAL PROTEIN S11 FAMILY MEMBER"/>
    <property type="match status" value="1"/>
</dbReference>
<dbReference type="PANTHER" id="PTHR10744:SF1">
    <property type="entry name" value="SMALL RIBOSOMAL SUBUNIT PROTEIN US17M"/>
    <property type="match status" value="1"/>
</dbReference>
<dbReference type="Pfam" id="PF00366">
    <property type="entry name" value="Ribosomal_S17"/>
    <property type="match status" value="1"/>
</dbReference>
<dbReference type="PRINTS" id="PR00973">
    <property type="entry name" value="RIBOSOMALS17"/>
</dbReference>
<dbReference type="SUPFAM" id="SSF50249">
    <property type="entry name" value="Nucleic acid-binding proteins"/>
    <property type="match status" value="1"/>
</dbReference>
<dbReference type="PROSITE" id="PS00056">
    <property type="entry name" value="RIBOSOMAL_S17"/>
    <property type="match status" value="1"/>
</dbReference>
<gene>
    <name evidence="1" type="primary">rpsQ</name>
    <name type="ordered locus">EUBREC_0427</name>
</gene>
<keyword id="KW-0687">Ribonucleoprotein</keyword>
<keyword id="KW-0689">Ribosomal protein</keyword>
<keyword id="KW-0694">RNA-binding</keyword>
<keyword id="KW-0699">rRNA-binding</keyword>
<feature type="chain" id="PRO_1000214783" description="Small ribosomal subunit protein uS17">
    <location>
        <begin position="1"/>
        <end position="85"/>
    </location>
</feature>
<sequence>MEERNLRKTRVGVVVSDKMDKTIVVAVRDNVRHPLYNKIVKKTYKLKAHDEKNDAKIGDTVRVMETRPLSKDKRWRLVEIMERAK</sequence>
<reference key="1">
    <citation type="journal article" date="2009" name="Proc. Natl. Acad. Sci. U.S.A.">
        <title>Characterizing a model human gut microbiota composed of members of its two dominant bacterial phyla.</title>
        <authorList>
            <person name="Mahowald M.A."/>
            <person name="Rey F.E."/>
            <person name="Seedorf H."/>
            <person name="Turnbaugh P.J."/>
            <person name="Fulton R.S."/>
            <person name="Wollam A."/>
            <person name="Shah N."/>
            <person name="Wang C."/>
            <person name="Magrini V."/>
            <person name="Wilson R.K."/>
            <person name="Cantarel B.L."/>
            <person name="Coutinho P.M."/>
            <person name="Henrissat B."/>
            <person name="Crock L.W."/>
            <person name="Russell A."/>
            <person name="Verberkmoes N.C."/>
            <person name="Hettich R.L."/>
            <person name="Gordon J.I."/>
        </authorList>
    </citation>
    <scope>NUCLEOTIDE SEQUENCE [LARGE SCALE GENOMIC DNA]</scope>
    <source>
        <strain>ATCC 33656 / DSM 3377 / JCM 17463 / KCTC 5835 / LMG 30912 / VPI 0990</strain>
    </source>
</reference>
<proteinExistence type="inferred from homology"/>
<organism>
    <name type="scientific">Agathobacter rectalis (strain ATCC 33656 / DSM 3377 / JCM 17463 / KCTC 5835 / VPI 0990)</name>
    <name type="common">Eubacterium rectale</name>
    <dbReference type="NCBI Taxonomy" id="515619"/>
    <lineage>
        <taxon>Bacteria</taxon>
        <taxon>Bacillati</taxon>
        <taxon>Bacillota</taxon>
        <taxon>Clostridia</taxon>
        <taxon>Lachnospirales</taxon>
        <taxon>Lachnospiraceae</taxon>
        <taxon>Agathobacter</taxon>
    </lineage>
</organism>